<accession>O47125</accession>
<reference key="1">
    <citation type="journal article" date="1997" name="Syst. Bot.">
        <title>Systematics of the Lyonia group (Andromedeae, Ericaceae) and the use of species as terminals in higher-level cladistic analyses.</title>
        <authorList>
            <person name="Kron K.A."/>
            <person name="Judd W.S."/>
        </authorList>
        <dbReference type="AGRICOLA" id="IND21637351"/>
    </citation>
    <scope>NUCLEOTIDE SEQUENCE [GENOMIC DNA]</scope>
</reference>
<feature type="chain" id="PRO_0000143498" description="Maturase K">
    <location>
        <begin position="1"/>
        <end position="507"/>
    </location>
</feature>
<proteinExistence type="inferred from homology"/>
<dbReference type="EMBL" id="U61308">
    <property type="protein sequence ID" value="AAB93733.1"/>
    <property type="molecule type" value="Genomic_DNA"/>
</dbReference>
<dbReference type="GO" id="GO:0009507">
    <property type="term" value="C:chloroplast"/>
    <property type="evidence" value="ECO:0007669"/>
    <property type="project" value="UniProtKB-SubCell"/>
</dbReference>
<dbReference type="GO" id="GO:0003723">
    <property type="term" value="F:RNA binding"/>
    <property type="evidence" value="ECO:0007669"/>
    <property type="project" value="UniProtKB-KW"/>
</dbReference>
<dbReference type="GO" id="GO:0006397">
    <property type="term" value="P:mRNA processing"/>
    <property type="evidence" value="ECO:0007669"/>
    <property type="project" value="UniProtKB-KW"/>
</dbReference>
<dbReference type="GO" id="GO:0008380">
    <property type="term" value="P:RNA splicing"/>
    <property type="evidence" value="ECO:0007669"/>
    <property type="project" value="UniProtKB-UniRule"/>
</dbReference>
<dbReference type="GO" id="GO:0008033">
    <property type="term" value="P:tRNA processing"/>
    <property type="evidence" value="ECO:0007669"/>
    <property type="project" value="UniProtKB-KW"/>
</dbReference>
<dbReference type="HAMAP" id="MF_01390">
    <property type="entry name" value="MatK"/>
    <property type="match status" value="1"/>
</dbReference>
<dbReference type="InterPro" id="IPR024937">
    <property type="entry name" value="Domain_X"/>
</dbReference>
<dbReference type="InterPro" id="IPR002866">
    <property type="entry name" value="Maturase_MatK"/>
</dbReference>
<dbReference type="InterPro" id="IPR024942">
    <property type="entry name" value="Maturase_MatK_N"/>
</dbReference>
<dbReference type="PANTHER" id="PTHR34811">
    <property type="entry name" value="MATURASE K"/>
    <property type="match status" value="1"/>
</dbReference>
<dbReference type="PANTHER" id="PTHR34811:SF1">
    <property type="entry name" value="MATURASE K"/>
    <property type="match status" value="1"/>
</dbReference>
<dbReference type="Pfam" id="PF01348">
    <property type="entry name" value="Intron_maturas2"/>
    <property type="match status" value="1"/>
</dbReference>
<dbReference type="Pfam" id="PF01824">
    <property type="entry name" value="MatK_N"/>
    <property type="match status" value="1"/>
</dbReference>
<sequence length="507" mass="60826">MEEFKRYLELDRSQQHDFIYPLIFQEYIYALARGRVLNGSIFFENAGYDNKSSLLIVKRLITHLITQMYQQNHFLFYTNDFNPNKFLGCNTNLYYQMIFEGFAVVVEIPFYLRLVSFLEGKERVKSHNLRSLHSIFPFLEDKFSHLNSLLDILIPHPVHLEILVQTLRYWVKDPSSLHLLRFFLHEYPNWNSLMTPKKFSFYFSKRNQRFFFFLYNFHVCEYESIFVFLRNQSSHLCSISSEIFLERISFYKKIELEEVFTKNFKAFLWAFKDPFLHYVRYRGKSFLASKDXXLLMNKWKYYLVNFWECYFSIWSQPRRIHINQLSNNCVDFLGYLLSVRLKPSMVRSQMIENSFLIENASKQFDTLVPITLLIRYLSKAKFCNVLGHPMSKPVWAALSDSDIIERFGRIYRNLSHYHSGSLKKISLYRIKYILRLSCARTLARKHKSTVRSFLKRLGMGLLEEFFTEEEQVFYLTFPKASSTSGKLYQGRIWYLDIFCINDPANHE</sequence>
<comment type="function">
    <text evidence="1">Usually encoded in the trnK tRNA gene intron. Probably assists in splicing its own and other chloroplast group II introns.</text>
</comment>
<comment type="subcellular location">
    <subcellularLocation>
        <location>Plastid</location>
        <location>Chloroplast</location>
    </subcellularLocation>
</comment>
<comment type="similarity">
    <text evidence="1">Belongs to the intron maturase 2 family. MatK subfamily.</text>
</comment>
<organism>
    <name type="scientific">Lyonia lucida</name>
    <name type="common">Fetterbush</name>
    <name type="synonym">Andromeda lucida</name>
    <dbReference type="NCBI Taxonomy" id="49152"/>
    <lineage>
        <taxon>Eukaryota</taxon>
        <taxon>Viridiplantae</taxon>
        <taxon>Streptophyta</taxon>
        <taxon>Embryophyta</taxon>
        <taxon>Tracheophyta</taxon>
        <taxon>Spermatophyta</taxon>
        <taxon>Magnoliopsida</taxon>
        <taxon>eudicotyledons</taxon>
        <taxon>Gunneridae</taxon>
        <taxon>Pentapetalae</taxon>
        <taxon>asterids</taxon>
        <taxon>Ericales</taxon>
        <taxon>Ericaceae</taxon>
        <taxon>Vaccinioideae</taxon>
        <taxon>Lyonieae</taxon>
        <taxon>Lyonia</taxon>
    </lineage>
</organism>
<geneLocation type="chloroplast"/>
<evidence type="ECO:0000255" key="1">
    <source>
        <dbReference type="HAMAP-Rule" id="MF_01390"/>
    </source>
</evidence>
<keyword id="KW-0150">Chloroplast</keyword>
<keyword id="KW-0507">mRNA processing</keyword>
<keyword id="KW-0934">Plastid</keyword>
<keyword id="KW-0694">RNA-binding</keyword>
<keyword id="KW-0819">tRNA processing</keyword>
<name>MATK_LYOLU</name>
<gene>
    <name evidence="1" type="primary">matK</name>
</gene>
<protein>
    <recommendedName>
        <fullName evidence="1">Maturase K</fullName>
    </recommendedName>
    <alternativeName>
        <fullName evidence="1">Intron maturase</fullName>
    </alternativeName>
</protein>